<accession>P43585</accession>
<accession>D6VTM5</accession>
<dbReference type="EMBL" id="D50617">
    <property type="protein sequence ID" value="BAA09234.1"/>
    <property type="molecule type" value="Genomic_DNA"/>
</dbReference>
<dbReference type="EMBL" id="BK006940">
    <property type="protein sequence ID" value="DAA12435.1"/>
    <property type="molecule type" value="Genomic_DNA"/>
</dbReference>
<dbReference type="PIR" id="S56250">
    <property type="entry name" value="S56250"/>
</dbReference>
<dbReference type="RefSeq" id="NP_116651.1">
    <property type="nucleotide sequence ID" value="NM_001179962.1"/>
</dbReference>
<dbReference type="PDB" id="3G3O">
    <property type="method" value="X-ray"/>
    <property type="resolution" value="2.10 A"/>
    <property type="chains" value="A=183-553"/>
</dbReference>
<dbReference type="PDBsum" id="3G3O"/>
<dbReference type="SMR" id="P43585"/>
<dbReference type="BioGRID" id="31142">
    <property type="interactions" value="108"/>
</dbReference>
<dbReference type="ComplexPortal" id="CPX-8568">
    <property type="entry name" value="Vacuolar transporter chaperone complex, VTC2 variant"/>
</dbReference>
<dbReference type="DIP" id="DIP-7596N"/>
<dbReference type="FunCoup" id="P43585">
    <property type="interactions" value="72"/>
</dbReference>
<dbReference type="IntAct" id="P43585">
    <property type="interactions" value="44"/>
</dbReference>
<dbReference type="MINT" id="P43585"/>
<dbReference type="STRING" id="4932.YFL004W"/>
<dbReference type="TCDB" id="4.E.1.1.1">
    <property type="family name" value="the vacuolar (acidocalcisome) polyphosphate polymerase/channel (v-pppc) family"/>
</dbReference>
<dbReference type="iPTMnet" id="P43585"/>
<dbReference type="PaxDb" id="4932-YFL004W"/>
<dbReference type="PeptideAtlas" id="P43585"/>
<dbReference type="EnsemblFungi" id="YFL004W_mRNA">
    <property type="protein sequence ID" value="YFL004W"/>
    <property type="gene ID" value="YFL004W"/>
</dbReference>
<dbReference type="GeneID" id="850544"/>
<dbReference type="KEGG" id="sce:YFL004W"/>
<dbReference type="AGR" id="SGD:S000001890"/>
<dbReference type="SGD" id="S000001890">
    <property type="gene designation" value="VTC2"/>
</dbReference>
<dbReference type="VEuPathDB" id="FungiDB:YFL004W"/>
<dbReference type="eggNOG" id="KOG1161">
    <property type="taxonomic scope" value="Eukaryota"/>
</dbReference>
<dbReference type="eggNOG" id="KOG4580">
    <property type="taxonomic scope" value="Eukaryota"/>
</dbReference>
<dbReference type="GeneTree" id="ENSGT00940000176481"/>
<dbReference type="HOGENOM" id="CLU_009308_2_0_1"/>
<dbReference type="InParanoid" id="P43585"/>
<dbReference type="OMA" id="SFKFWVH"/>
<dbReference type="OrthoDB" id="6493944at2759"/>
<dbReference type="BioCyc" id="YEAST:YFL004W-MONOMER"/>
<dbReference type="BioGRID-ORCS" id="850544">
    <property type="hits" value="6 hits in 10 CRISPR screens"/>
</dbReference>
<dbReference type="EvolutionaryTrace" id="P43585"/>
<dbReference type="PRO" id="PR:P43585"/>
<dbReference type="Proteomes" id="UP000002311">
    <property type="component" value="Chromosome VI"/>
</dbReference>
<dbReference type="RNAct" id="P43585">
    <property type="molecule type" value="protein"/>
</dbReference>
<dbReference type="GO" id="GO:0000421">
    <property type="term" value="C:autophagosome membrane"/>
    <property type="evidence" value="ECO:0000303"/>
    <property type="project" value="ComplexPortal"/>
</dbReference>
<dbReference type="GO" id="GO:0005938">
    <property type="term" value="C:cell cortex"/>
    <property type="evidence" value="ECO:0007669"/>
    <property type="project" value="UniProtKB-SubCell"/>
</dbReference>
<dbReference type="GO" id="GO:0031410">
    <property type="term" value="C:cytoplasmic vesicle"/>
    <property type="evidence" value="ECO:0007669"/>
    <property type="project" value="UniProtKB-KW"/>
</dbReference>
<dbReference type="GO" id="GO:0005783">
    <property type="term" value="C:endoplasmic reticulum"/>
    <property type="evidence" value="ECO:0000314"/>
    <property type="project" value="SGD"/>
</dbReference>
<dbReference type="GO" id="GO:0005789">
    <property type="term" value="C:endoplasmic reticulum membrane"/>
    <property type="evidence" value="ECO:0007669"/>
    <property type="project" value="UniProtKB-SubCell"/>
</dbReference>
<dbReference type="GO" id="GO:0000329">
    <property type="term" value="C:fungal-type vacuole membrane"/>
    <property type="evidence" value="ECO:0000314"/>
    <property type="project" value="SGD"/>
</dbReference>
<dbReference type="GO" id="GO:0033254">
    <property type="term" value="C:vacuolar transporter chaperone complex"/>
    <property type="evidence" value="ECO:0000353"/>
    <property type="project" value="SGD"/>
</dbReference>
<dbReference type="GO" id="GO:0005516">
    <property type="term" value="F:calmodulin binding"/>
    <property type="evidence" value="ECO:0000314"/>
    <property type="project" value="SGD"/>
</dbReference>
<dbReference type="GO" id="GO:0000822">
    <property type="term" value="F:inositol hexakisphosphate binding"/>
    <property type="evidence" value="ECO:0000314"/>
    <property type="project" value="UniProtKB"/>
</dbReference>
<dbReference type="GO" id="GO:0061736">
    <property type="term" value="P:engulfment of target by autophagosome"/>
    <property type="evidence" value="ECO:0000303"/>
    <property type="project" value="ComplexPortal"/>
</dbReference>
<dbReference type="GO" id="GO:0030643">
    <property type="term" value="P:intracellular phosphate ion homeostasis"/>
    <property type="evidence" value="ECO:0000315"/>
    <property type="project" value="UniProtKB"/>
</dbReference>
<dbReference type="GO" id="GO:0016237">
    <property type="term" value="P:microautophagy"/>
    <property type="evidence" value="ECO:0000314"/>
    <property type="project" value="SGD"/>
</dbReference>
<dbReference type="GO" id="GO:0006799">
    <property type="term" value="P:polyphosphate biosynthetic process"/>
    <property type="evidence" value="ECO:0000314"/>
    <property type="project" value="ComplexPortal"/>
</dbReference>
<dbReference type="GO" id="GO:0006797">
    <property type="term" value="P:polyphosphate metabolic process"/>
    <property type="evidence" value="ECO:0000315"/>
    <property type="project" value="SGD"/>
</dbReference>
<dbReference type="GO" id="GO:0008104">
    <property type="term" value="P:protein localization"/>
    <property type="evidence" value="ECO:0000315"/>
    <property type="project" value="SGD"/>
</dbReference>
<dbReference type="GO" id="GO:0007034">
    <property type="term" value="P:vacuolar transport"/>
    <property type="evidence" value="ECO:0000314"/>
    <property type="project" value="SGD"/>
</dbReference>
<dbReference type="GO" id="GO:0042144">
    <property type="term" value="P:vacuole fusion, non-autophagic"/>
    <property type="evidence" value="ECO:0000315"/>
    <property type="project" value="SGD"/>
</dbReference>
<dbReference type="CDD" id="cd07892">
    <property type="entry name" value="PolyPPase_VTC2-3_like"/>
    <property type="match status" value="1"/>
</dbReference>
<dbReference type="CDD" id="cd14480">
    <property type="entry name" value="SPX_VTC2_like"/>
    <property type="match status" value="1"/>
</dbReference>
<dbReference type="Gene3D" id="3.20.100.30">
    <property type="entry name" value="VTC, catalytic tunnel domain"/>
    <property type="match status" value="1"/>
</dbReference>
<dbReference type="InterPro" id="IPR003807">
    <property type="entry name" value="DUF202"/>
</dbReference>
<dbReference type="InterPro" id="IPR004331">
    <property type="entry name" value="SPX_dom"/>
</dbReference>
<dbReference type="InterPro" id="IPR051572">
    <property type="entry name" value="VTC_Complex_Subunit"/>
</dbReference>
<dbReference type="InterPro" id="IPR018966">
    <property type="entry name" value="VTC_domain"/>
</dbReference>
<dbReference type="InterPro" id="IPR042267">
    <property type="entry name" value="VTC_sf"/>
</dbReference>
<dbReference type="PANTHER" id="PTHR46140">
    <property type="entry name" value="VACUOLAR TRANSPORTER CHAPERONE 1-RELATED"/>
    <property type="match status" value="1"/>
</dbReference>
<dbReference type="PANTHER" id="PTHR46140:SF2">
    <property type="entry name" value="VACUOLAR TRANSPORTER CHAPERONE 3 COMPLEX SUBUNIT 3-RELATED"/>
    <property type="match status" value="1"/>
</dbReference>
<dbReference type="Pfam" id="PF02656">
    <property type="entry name" value="DUF202"/>
    <property type="match status" value="1"/>
</dbReference>
<dbReference type="Pfam" id="PF09359">
    <property type="entry name" value="VTC"/>
    <property type="match status" value="1"/>
</dbReference>
<dbReference type="PROSITE" id="PS51382">
    <property type="entry name" value="SPX"/>
    <property type="match status" value="1"/>
</dbReference>
<name>VTC2_YEAST</name>
<proteinExistence type="evidence at protein level"/>
<reference key="1">
    <citation type="journal article" date="1996" name="Yeast">
        <title>Sequencing of a 23 kb fragment from Saccharomyces cerevisiae chromosome VI.</title>
        <authorList>
            <person name="Naitou M."/>
            <person name="Ozawa M."/>
            <person name="Sasanuma S."/>
            <person name="Kobayashi M."/>
            <person name="Hagiwara H."/>
            <person name="Shibata T."/>
            <person name="Hanaoka F."/>
            <person name="Watanabe K."/>
            <person name="Ono A."/>
            <person name="Yamazaki M."/>
            <person name="Tashiro H."/>
            <person name="Eki T."/>
            <person name="Murakami Y."/>
        </authorList>
    </citation>
    <scope>NUCLEOTIDE SEQUENCE [GENOMIC DNA]</scope>
    <source>
        <strain>ATCC 204511 / S288c / AB972</strain>
    </source>
</reference>
<reference key="2">
    <citation type="journal article" date="1995" name="Nat. Genet.">
        <title>Analysis of the nucleotide sequence of chromosome VI from Saccharomyces cerevisiae.</title>
        <authorList>
            <person name="Murakami Y."/>
            <person name="Naitou M."/>
            <person name="Hagiwara H."/>
            <person name="Shibata T."/>
            <person name="Ozawa M."/>
            <person name="Sasanuma S."/>
            <person name="Sasanuma M."/>
            <person name="Tsuchiya Y."/>
            <person name="Soeda E."/>
            <person name="Yokoyama K."/>
            <person name="Yamazaki M."/>
            <person name="Tashiro H."/>
            <person name="Eki T."/>
        </authorList>
    </citation>
    <scope>NUCLEOTIDE SEQUENCE [LARGE SCALE GENOMIC DNA]</scope>
    <source>
        <strain>ATCC 204508 / S288c</strain>
    </source>
</reference>
<reference key="3">
    <citation type="journal article" date="2014" name="G3 (Bethesda)">
        <title>The reference genome sequence of Saccharomyces cerevisiae: Then and now.</title>
        <authorList>
            <person name="Engel S.R."/>
            <person name="Dietrich F.S."/>
            <person name="Fisk D.G."/>
            <person name="Binkley G."/>
            <person name="Balakrishnan R."/>
            <person name="Costanzo M.C."/>
            <person name="Dwight S.S."/>
            <person name="Hitz B.C."/>
            <person name="Karra K."/>
            <person name="Nash R.S."/>
            <person name="Weng S."/>
            <person name="Wong E.D."/>
            <person name="Lloyd P."/>
            <person name="Skrzypek M.S."/>
            <person name="Miyasato S.R."/>
            <person name="Simison M."/>
            <person name="Cherry J.M."/>
        </authorList>
    </citation>
    <scope>GENOME REANNOTATION</scope>
    <source>
        <strain>ATCC 204508 / S288c</strain>
    </source>
</reference>
<reference key="4">
    <citation type="submission" date="2005-06" db="UniProtKB">
        <authorList>
            <person name="Bienvenut W.V."/>
            <person name="Peters C."/>
        </authorList>
    </citation>
    <scope>PROTEIN SEQUENCE OF 7-27; 72-93; 103-127; 152-175; 208-219; 308-322; 324-340; 347-358; 448-477 AND 500-515</scope>
    <scope>IDENTIFICATION BY MASS SPECTROMETRY</scope>
</reference>
<reference key="5">
    <citation type="journal article" date="1999" name="J. Biol. Chem.">
        <title>A novel family of yeast chaperons involved in the distribution of V-ATPase and other membrane proteins.</title>
        <authorList>
            <person name="Cohen A."/>
            <person name="Perzov N."/>
            <person name="Nelson H."/>
            <person name="Nelson N."/>
        </authorList>
    </citation>
    <scope>GENE FAMILY</scope>
</reference>
<reference key="6">
    <citation type="journal article" date="2000" name="Mol. Biol. Cell">
        <title>New components of a system for phosphate accumulation and polyphosphate metabolism in Saccharomyces cerevisiae revealed by genomic expression analysis.</title>
        <authorList>
            <person name="Ogawa N."/>
            <person name="DeRisi J.L."/>
            <person name="Brown P.O."/>
        </authorList>
    </citation>
    <scope>INDUCTION</scope>
</reference>
<reference key="7">
    <citation type="journal article" date="2002" name="EMBO J.">
        <title>The Vtc proteins in vacuole fusion: coupling NSF activity to V(0) trans-complex formation.</title>
        <authorList>
            <person name="Mueller O."/>
            <person name="Bayer M.J."/>
            <person name="Peters C."/>
            <person name="Andersen J.S."/>
            <person name="Mann M."/>
            <person name="Mayer A."/>
        </authorList>
    </citation>
    <scope>FUNCTION</scope>
    <scope>IDENTIFICATION IN VTC COMPLEX</scope>
    <scope>SUBUNIT</scope>
    <scope>INTERACTION WITH NYV1 AND VPH1</scope>
</reference>
<reference key="8">
    <citation type="journal article" date="2003" name="J. Cell Sci.">
        <title>Role of the Vtc proteins in V-ATPase stability and membrane trafficking.</title>
        <authorList>
            <person name="Mueller O."/>
            <person name="Neumann H."/>
            <person name="Bayer M.J."/>
            <person name="Mayer A."/>
        </authorList>
    </citation>
    <scope>TOPOLOGY</scope>
    <scope>SUBCELLULAR LOCATION</scope>
</reference>
<reference key="9">
    <citation type="journal article" date="2003" name="Nature">
        <title>Global analysis of protein expression in yeast.</title>
        <authorList>
            <person name="Ghaemmaghami S."/>
            <person name="Huh W.-K."/>
            <person name="Bower K."/>
            <person name="Howson R.W."/>
            <person name="Belle A."/>
            <person name="Dephoure N."/>
            <person name="O'Shea E.K."/>
            <person name="Weissman J.S."/>
        </authorList>
    </citation>
    <scope>LEVEL OF PROTEIN EXPRESSION [LARGE SCALE ANALYSIS]</scope>
</reference>
<reference key="10">
    <citation type="journal article" date="2005" name="Mol. Cell. Proteomics">
        <title>Quantitative phosphoproteomics applied to the yeast pheromone signaling pathway.</title>
        <authorList>
            <person name="Gruhler A."/>
            <person name="Olsen J.V."/>
            <person name="Mohammed S."/>
            <person name="Mortensen P."/>
            <person name="Faergeman N.J."/>
            <person name="Mann M."/>
            <person name="Jensen O.N."/>
        </authorList>
    </citation>
    <scope>PHOSPHORYLATION [LARGE SCALE ANALYSIS] AT SER-657</scope>
    <scope>IDENTIFICATION BY MASS SPECTROMETRY [LARGE SCALE ANALYSIS]</scope>
    <source>
        <strain>YAL6B</strain>
    </source>
</reference>
<reference key="11">
    <citation type="journal article" date="2006" name="Proc. Natl. Acad. Sci. U.S.A.">
        <title>A global topology map of the Saccharomyces cerevisiae membrane proteome.</title>
        <authorList>
            <person name="Kim H."/>
            <person name="Melen K."/>
            <person name="Oesterberg M."/>
            <person name="von Heijne G."/>
        </authorList>
    </citation>
    <scope>TOPOLOGY [LARGE SCALE ANALYSIS]</scope>
    <source>
        <strain>ATCC 208353 / W303-1A</strain>
    </source>
</reference>
<reference key="12">
    <citation type="journal article" date="2007" name="J. Proteome Res.">
        <title>Large-scale phosphorylation analysis of alpha-factor-arrested Saccharomyces cerevisiae.</title>
        <authorList>
            <person name="Li X."/>
            <person name="Gerber S.A."/>
            <person name="Rudner A.D."/>
            <person name="Beausoleil S.A."/>
            <person name="Haas W."/>
            <person name="Villen J."/>
            <person name="Elias J.E."/>
            <person name="Gygi S.P."/>
        </authorList>
    </citation>
    <scope>PHOSPHORYLATION [LARGE SCALE ANALYSIS] AT SER-182; SER-196; SER-264; SER-583; SER-615; SER-616 AND SER-657</scope>
    <scope>IDENTIFICATION BY MASS SPECTROMETRY [LARGE SCALE ANALYSIS]</scope>
    <source>
        <strain>ADR376</strain>
    </source>
</reference>
<reference key="13">
    <citation type="journal article" date="2007" name="Mol. Biol. Cell">
        <title>The vacuolar transporter chaperone (VTC) complex is required for microautophagy.</title>
        <authorList>
            <person name="Uttenweiler A."/>
            <person name="Schwarz H."/>
            <person name="Neumann H."/>
            <person name="Mayer A."/>
        </authorList>
    </citation>
    <scope>FUNCTION</scope>
    <scope>SUBCELLULAR LOCATION</scope>
</reference>
<reference key="14">
    <citation type="journal article" date="2007" name="Proc. Natl. Acad. Sci. U.S.A.">
        <title>Analysis of phosphorylation sites on proteins from Saccharomyces cerevisiae by electron transfer dissociation (ETD) mass spectrometry.</title>
        <authorList>
            <person name="Chi A."/>
            <person name="Huttenhower C."/>
            <person name="Geer L.Y."/>
            <person name="Coon J.J."/>
            <person name="Syka J.E.P."/>
            <person name="Bai D.L."/>
            <person name="Shabanowitz J."/>
            <person name="Burke D.J."/>
            <person name="Troyanskaya O.G."/>
            <person name="Hunt D.F."/>
        </authorList>
    </citation>
    <scope>PHOSPHORYLATION [LARGE SCALE ANALYSIS] AT SER-583 AND SER-657</scope>
    <scope>IDENTIFICATION BY MASS SPECTROMETRY [LARGE SCALE ANALYSIS]</scope>
</reference>
<reference key="15">
    <citation type="journal article" date="2008" name="Mol. Cell. Proteomics">
        <title>A multidimensional chromatography technology for in-depth phosphoproteome analysis.</title>
        <authorList>
            <person name="Albuquerque C.P."/>
            <person name="Smolka M.B."/>
            <person name="Payne S.H."/>
            <person name="Bafna V."/>
            <person name="Eng J."/>
            <person name="Zhou H."/>
        </authorList>
    </citation>
    <scope>PHOSPHORYLATION [LARGE SCALE ANALYSIS] AT SER-182; SER-187; SER-615; SER-616 AND SER-657</scope>
    <scope>IDENTIFICATION BY MASS SPECTROMETRY [LARGE SCALE ANALYSIS]</scope>
</reference>
<reference key="16">
    <citation type="journal article" date="2009" name="Science">
        <title>Global analysis of Cdk1 substrate phosphorylation sites provides insights into evolution.</title>
        <authorList>
            <person name="Holt L.J."/>
            <person name="Tuch B.B."/>
            <person name="Villen J."/>
            <person name="Johnson A.D."/>
            <person name="Gygi S.P."/>
            <person name="Morgan D.O."/>
        </authorList>
    </citation>
    <scope>PHOSPHORYLATION [LARGE SCALE ANALYSIS] AT SER-182; SER-187; SER-196; SER-583; SER-615; SER-616; THR-620; SER-626 AND SER-657</scope>
    <scope>IDENTIFICATION BY MASS SPECTROMETRY [LARGE SCALE ANALYSIS]</scope>
</reference>
<reference key="17">
    <citation type="journal article" date="2014" name="J. Cell Sci.">
        <title>Coupled synthesis and translocation restrains polyphosphate to acidocalcisome-like vacuoles and prevents its toxicity.</title>
        <authorList>
            <person name="Gerasimaite R."/>
            <person name="Sharma S."/>
            <person name="Desfougeres Y."/>
            <person name="Schmidt A."/>
            <person name="Mayer A."/>
        </authorList>
    </citation>
    <scope>FUNCTION</scope>
</reference>
<reference key="18">
    <citation type="journal article" date="2016" name="J. Biol. Chem.">
        <title>Vtc5, a novel subunit of the vacuolar transporter chaperone complex, regulates polyphosphate synthesis and phosphate homeostasis in yeast.</title>
        <authorList>
            <person name="Desfougeres Y."/>
            <person name="Gerasimaite R.U."/>
            <person name="Jessen H.J."/>
            <person name="Mayer A."/>
        </authorList>
    </citation>
    <scope>INTERACTION WITH VTC5</scope>
</reference>
<reference key="19">
    <citation type="journal article" date="2016" name="Science">
        <title>Control of eukaryotic phosphate homeostasis by inositol polyphosphate sensor domains.</title>
        <authorList>
            <person name="Wild R."/>
            <person name="Gerasimaite R."/>
            <person name="Jung J.Y."/>
            <person name="Truffault V."/>
            <person name="Pavlovic I."/>
            <person name="Schmidt A."/>
            <person name="Saiardi A."/>
            <person name="Jessen H.J."/>
            <person name="Poirier Y."/>
            <person name="Hothorn M."/>
            <person name="Mayer A."/>
        </authorList>
    </citation>
    <scope>FUNCTION</scope>
    <scope>DOMAIN</scope>
    <scope>MUTAGENESIS OF TYR-22; LYS-26; LYS-127; LYS-130; LYS-131 AND LYS-134</scope>
</reference>
<reference key="20">
    <citation type="journal article" date="2017" name="ACS Chem. Biol.">
        <title>Inositol pyrophosphate specificity of the SPX-dependent polyphosphate polymerase VTC.</title>
        <authorList>
            <person name="Gerasimaite R."/>
            <person name="Pavlovic I."/>
            <person name="Capolicchio S."/>
            <person name="Hofer A."/>
            <person name="Schmidt A."/>
            <person name="Jessen H.J."/>
            <person name="Mayer A."/>
        </authorList>
    </citation>
    <scope>DOMAIN</scope>
</reference>
<reference evidence="21" key="21">
    <citation type="journal article" date="2009" name="Science">
        <title>Catalytic core of a membrane-associated eukaryotic polyphosphate polymerase.</title>
        <authorList>
            <person name="Hothorn M."/>
            <person name="Neumann H."/>
            <person name="Lenherr E.D."/>
            <person name="Wehner M."/>
            <person name="Rybin V."/>
            <person name="Hassa P.O."/>
            <person name="Uttenweiler A."/>
            <person name="Reinhardt M."/>
            <person name="Schmidt A."/>
            <person name="Seiler J."/>
            <person name="Ladurner A.G."/>
            <person name="Herrmann C."/>
            <person name="Scheffzek K."/>
            <person name="Mayer A."/>
        </authorList>
    </citation>
    <scope>X-RAY CRYSTALLOGRAPHY (2.10 ANGSTROMS) OF 183-553</scope>
</reference>
<evidence type="ECO:0000250" key="1">
    <source>
        <dbReference type="UniProtKB" id="Q02725"/>
    </source>
</evidence>
<evidence type="ECO:0000255" key="2"/>
<evidence type="ECO:0000255" key="3">
    <source>
        <dbReference type="PROSITE-ProRule" id="PRU00714"/>
    </source>
</evidence>
<evidence type="ECO:0000256" key="4">
    <source>
        <dbReference type="SAM" id="MobiDB-lite"/>
    </source>
</evidence>
<evidence type="ECO:0000269" key="5">
    <source>
    </source>
</evidence>
<evidence type="ECO:0000269" key="6">
    <source>
    </source>
</evidence>
<evidence type="ECO:0000269" key="7">
    <source>
    </source>
</evidence>
<evidence type="ECO:0000269" key="8">
    <source>
    </source>
</evidence>
<evidence type="ECO:0000269" key="9">
    <source>
    </source>
</evidence>
<evidence type="ECO:0000269" key="10">
    <source>
    </source>
</evidence>
<evidence type="ECO:0000269" key="11">
    <source>
    </source>
</evidence>
<evidence type="ECO:0000269" key="12">
    <source>
    </source>
</evidence>
<evidence type="ECO:0000269" key="13">
    <source>
    </source>
</evidence>
<evidence type="ECO:0000303" key="14">
    <source>
    </source>
</evidence>
<evidence type="ECO:0000303" key="15">
    <source>
    </source>
</evidence>
<evidence type="ECO:0000303" key="16">
    <source>
    </source>
</evidence>
<evidence type="ECO:0000303" key="17">
    <source>
    </source>
</evidence>
<evidence type="ECO:0000305" key="18"/>
<evidence type="ECO:0000305" key="19">
    <source>
    </source>
</evidence>
<evidence type="ECO:0000305" key="20">
    <source>
    </source>
</evidence>
<evidence type="ECO:0007744" key="21">
    <source>
        <dbReference type="PDB" id="3G3O"/>
    </source>
</evidence>
<evidence type="ECO:0007744" key="22">
    <source>
    </source>
</evidence>
<evidence type="ECO:0007744" key="23">
    <source>
    </source>
</evidence>
<evidence type="ECO:0007744" key="24">
    <source>
    </source>
</evidence>
<evidence type="ECO:0007744" key="25">
    <source>
    </source>
</evidence>
<evidence type="ECO:0007744" key="26">
    <source>
    </source>
</evidence>
<evidence type="ECO:0007829" key="27">
    <source>
        <dbReference type="PDB" id="3G3O"/>
    </source>
</evidence>
<protein>
    <recommendedName>
        <fullName evidence="18">Vacuolar transporter chaperone complex subunit 2</fullName>
    </recommendedName>
    <alternativeName>
        <fullName evidence="15">Phosphate metabolism protein 1</fullName>
    </alternativeName>
    <alternativeName>
        <fullName evidence="17">SPX-dependent polyphosphate polymerase VTC subunit 2</fullName>
    </alternativeName>
    <alternativeName>
        <fullName evidence="16">Vacuolar membrane polyphosphate polymerase accessory subunit 2</fullName>
        <shortName>PolyP polymerase</shortName>
    </alternativeName>
</protein>
<keyword id="KW-0002">3D-structure</keyword>
<keyword id="KW-0963">Cytoplasm</keyword>
<keyword id="KW-0968">Cytoplasmic vesicle</keyword>
<keyword id="KW-0903">Direct protein sequencing</keyword>
<keyword id="KW-0256">Endoplasmic reticulum</keyword>
<keyword id="KW-0472">Membrane</keyword>
<keyword id="KW-0597">Phosphoprotein</keyword>
<keyword id="KW-1185">Reference proteome</keyword>
<keyword id="KW-0812">Transmembrane</keyword>
<keyword id="KW-1133">Transmembrane helix</keyword>
<keyword id="KW-0926">Vacuole</keyword>
<gene>
    <name evidence="14" type="primary">VTC2</name>
    <name evidence="15" type="synonym">PHM1</name>
    <name type="ordered locus">YFL004W</name>
</gene>
<comment type="function">
    <text evidence="5 6 10 11 12">Accessory subunit of the vacuolar transporter chaperone (VTC) complex. The VTC complex acts as a vacuolar polyphosphate polymerase that catalyzes the synthesis of inorganic polyphosphate (polyP) via transfer of phosphate from ATP to a growing polyP chain, releasing ADP. VTC exposes its catalytic domain VTC4 to the cytosol, where the growing polyP chain winds through a tunnel-shaped pocket, integrating cytoplasmic polymer synthesis with polyP membrane translocation (PubMed:19390046). The VTC complex carries 9 vacuolar transmembrane domains, which are likely to constitute the translocation channel into the organelle lumen (PubMed:19390046, PubMed:25315834). PolyP synthesis is tightly coupled to its transport into the vacuole lumen, in order to avoid otherwise toxic intermediates in the cytosol, and it depends on the proton gradient across the membrane, formed by V-ATPase (PubMed:25315834). Binds inositol hexakisphosphate (Ins6P) and similar inositol polyphosphates, such as 5-diphospho-inositol pentakisphosphate (5-InsP7); these are important intracellular signaling molecules (PubMed:27080106). Inositol polyphosphate binding promotes vacuolar polyphosphate synthesis (PubMed:27080106). The VTC complex also plays a role in vacuolar membrane fusion (PubMed:11102525, PubMed:11823419). Required for SEC18/NSF activity in SNARE priming, membrane binding of LMA1 and V(0) trans-complex formation (PubMed:11823419).</text>
</comment>
<comment type="subunit">
    <text evidence="6 10 13">The VTC core complex is an integral membrane heterooligomer composed of the catalytic subunit VTC4 and the accessory subunits VTC1, VTC2 and VTC3. The complex exists in 2 different sub-complexes: VTC1-VTC2-VCT4 and VCT1-VTC3-VTC4. The VCT1-VTC3-VTC4 subcomplex is mostly found on the vacuolar membrane. The VTC1-VTC2-VCT4 subcomplex is observed in the cell periphery, probably ER and nuclear envelope, but localizes to the vacuole under phosphate starvation. Each subunit contains 3 transmembrane helices. VTC1 is a small membrane protein without hydrophilic domain. VTC2, VTC3 and VTC4 are related and have 2 hydrophilic domains that face the cytosol, an N-terminal SPX domain and the central core domain. The central core in VTC4 is the catalytic domain, with the essential catalytic lysine replaced by isoleucine and leucine in VTC2 and VTC3, respectively (PubMed:19390046). The core complex associates with the accessory subunit VTC5 (PubMed:27587415). The complex interacts with the v-SNARE NYV1 and with the V(0) subunit of V-ATPase VPH1 (PubMed:11823419).</text>
</comment>
<comment type="subcellular location">
    <subcellularLocation>
        <location evidence="7 10">Vacuole membrane</location>
        <topology evidence="10">Multi-pass membrane protein</topology>
    </subcellularLocation>
    <subcellularLocation>
        <location evidence="9 10">Cytoplasm</location>
        <location evidence="9 10">Cell cortex</location>
    </subcellularLocation>
    <subcellularLocation>
        <location evidence="9">Endoplasmic reticulum membrane</location>
        <topology evidence="10">Multi-pass membrane protein</topology>
    </subcellularLocation>
    <subcellularLocation>
        <location evidence="9">Cytoplasmic vesicle</location>
        <location evidence="9">Autophagosome membrane</location>
        <topology evidence="10">Multi-pass membrane protein</topology>
    </subcellularLocation>
</comment>
<comment type="induction">
    <text evidence="5">By low phosphate.</text>
</comment>
<comment type="domain">
    <text evidence="19 20">The SPX domain has very high affinity for inositol polyphosphates, such as myo-inositol hexakisphosphate and 5-diphospho-myo-inositol pentakisphosphate (5-InsP7), and moderate affinity for inorganic pyrophosphate. Its affinity for inorganic phosphate is 2 to 3 orders of magnitude lower (Probable). SPX domains may integrate inositol pyrophosphates (PP-InsP)-dependent signaling to adapt cytosolic phosphate concentrations to different metabolic situations (Probable).</text>
</comment>
<comment type="miscellaneous">
    <text evidence="8">Present with 2915 molecules/cell in log phase SD medium.</text>
</comment>
<comment type="similarity">
    <text evidence="18">Belongs to the VTC2/3 family.</text>
</comment>
<organism>
    <name type="scientific">Saccharomyces cerevisiae (strain ATCC 204508 / S288c)</name>
    <name type="common">Baker's yeast</name>
    <dbReference type="NCBI Taxonomy" id="559292"/>
    <lineage>
        <taxon>Eukaryota</taxon>
        <taxon>Fungi</taxon>
        <taxon>Dikarya</taxon>
        <taxon>Ascomycota</taxon>
        <taxon>Saccharomycotina</taxon>
        <taxon>Saccharomycetes</taxon>
        <taxon>Saccharomycetales</taxon>
        <taxon>Saccharomycetaceae</taxon>
        <taxon>Saccharomyces</taxon>
    </lineage>
</organism>
<feature type="chain" id="PRO_0000065935" description="Vacuolar transporter chaperone complex subunit 2">
    <location>
        <begin position="1"/>
        <end position="828"/>
    </location>
</feature>
<feature type="topological domain" description="Cytoplasmic" evidence="1">
    <location>
        <begin position="1"/>
        <end position="693"/>
    </location>
</feature>
<feature type="transmembrane region" description="Helical" evidence="2">
    <location>
        <begin position="694"/>
        <end position="716"/>
    </location>
</feature>
<feature type="topological domain" description="Vacuolar" evidence="1">
    <location>
        <begin position="717"/>
        <end position="727"/>
    </location>
</feature>
<feature type="transmembrane region" description="Helical" evidence="2">
    <location>
        <begin position="728"/>
        <end position="748"/>
    </location>
</feature>
<feature type="topological domain" description="Cytoplasmic" evidence="1">
    <location>
        <begin position="749"/>
        <end position="766"/>
    </location>
</feature>
<feature type="transmembrane region" description="Helical" evidence="2">
    <location>
        <begin position="767"/>
        <end position="787"/>
    </location>
</feature>
<feature type="topological domain" description="Vacuolar" evidence="1">
    <location>
        <begin position="788"/>
        <end position="828"/>
    </location>
</feature>
<feature type="domain" description="SPX" evidence="3">
    <location>
        <begin position="1"/>
        <end position="146"/>
    </location>
</feature>
<feature type="region of interest" description="Important for inositol polyphosphate binding" evidence="12">
    <location>
        <begin position="127"/>
        <end position="134"/>
    </location>
</feature>
<feature type="region of interest" description="Disordered" evidence="4">
    <location>
        <begin position="580"/>
        <end position="636"/>
    </location>
</feature>
<feature type="compositionally biased region" description="Acidic residues" evidence="4">
    <location>
        <begin position="610"/>
        <end position="621"/>
    </location>
</feature>
<feature type="compositionally biased region" description="Basic residues" evidence="4">
    <location>
        <begin position="627"/>
        <end position="636"/>
    </location>
</feature>
<feature type="site" description="Important for inositol polyphosphate binding" evidence="12">
    <location>
        <position position="22"/>
    </location>
</feature>
<feature type="site" description="Important for inositol polyphosphate binding" evidence="12">
    <location>
        <position position="26"/>
    </location>
</feature>
<feature type="modified residue" description="Phosphoserine" evidence="24 25 26">
    <location>
        <position position="182"/>
    </location>
</feature>
<feature type="modified residue" description="Phosphoserine" evidence="25 26">
    <location>
        <position position="187"/>
    </location>
</feature>
<feature type="modified residue" description="Phosphoserine" evidence="24 26">
    <location>
        <position position="196"/>
    </location>
</feature>
<feature type="modified residue" description="Phosphoserine" evidence="24">
    <location>
        <position position="264"/>
    </location>
</feature>
<feature type="modified residue" description="Phosphoserine" evidence="23 24 26">
    <location>
        <position position="583"/>
    </location>
</feature>
<feature type="modified residue" description="Phosphoserine" evidence="24 25 26">
    <location>
        <position position="615"/>
    </location>
</feature>
<feature type="modified residue" description="Phosphoserine" evidence="24 25 26">
    <location>
        <position position="616"/>
    </location>
</feature>
<feature type="modified residue" description="Phosphothreonine" evidence="26">
    <location>
        <position position="620"/>
    </location>
</feature>
<feature type="modified residue" description="Phosphoserine" evidence="26">
    <location>
        <position position="626"/>
    </location>
</feature>
<feature type="modified residue" description="Phosphoserine" evidence="22 23 24 25 26">
    <location>
        <position position="657"/>
    </location>
</feature>
<feature type="mutagenesis site" description="Decreases affinity for inositol polyphosphate. Strongly decreases affinity for inositol polyphosphate; when associated with A-26 and A-131." evidence="12">
    <original>Y</original>
    <variation>F</variation>
    <location>
        <position position="22"/>
    </location>
</feature>
<feature type="mutagenesis site" description="Decreases affinity for inositol polyphosphate. Strongly decreases affinity for inositol polyphosphate; when associated with F-22 and A-131." evidence="12">
    <original>K</original>
    <variation>A</variation>
    <location>
        <position position="26"/>
    </location>
</feature>
<feature type="mutagenesis site" description="Abolishes inositol polyphosphate binding; when associated with A-130 and A-134." evidence="12">
    <original>K</original>
    <variation>A</variation>
    <location>
        <position position="127"/>
    </location>
</feature>
<feature type="mutagenesis site" description="Abolishes inositol polyphosphate binding; when associated with A-127 and A-134." evidence="12">
    <original>K</original>
    <variation>A</variation>
    <location>
        <position position="130"/>
    </location>
</feature>
<feature type="mutagenesis site" description="Decreases affinity for inositol polyphosphate. Strongly decreases affinity for inositol polyphosphate; when associated with F-22 and A-26." evidence="12">
    <original>K</original>
    <variation>A</variation>
    <location>
        <position position="131"/>
    </location>
</feature>
<feature type="mutagenesis site" description="Abolishes inositol polyphosphate binding; when associated with A-127 and A-130." evidence="12">
    <original>K</original>
    <variation>A</variation>
    <location>
        <position position="134"/>
    </location>
</feature>
<feature type="strand" evidence="27">
    <location>
        <begin position="204"/>
        <end position="210"/>
    </location>
</feature>
<feature type="helix" evidence="27">
    <location>
        <begin position="212"/>
        <end position="223"/>
    </location>
</feature>
<feature type="strand" evidence="27">
    <location>
        <begin position="278"/>
        <end position="284"/>
    </location>
</feature>
<feature type="helix" evidence="27">
    <location>
        <begin position="289"/>
        <end position="296"/>
    </location>
</feature>
<feature type="strand" evidence="27">
    <location>
        <begin position="303"/>
        <end position="310"/>
    </location>
</feature>
<feature type="helix" evidence="27">
    <location>
        <begin position="312"/>
        <end position="314"/>
    </location>
</feature>
<feature type="strand" evidence="27">
    <location>
        <begin position="318"/>
        <end position="325"/>
    </location>
</feature>
<feature type="strand" evidence="27">
    <location>
        <begin position="336"/>
        <end position="343"/>
    </location>
</feature>
<feature type="helix" evidence="27">
    <location>
        <begin position="345"/>
        <end position="347"/>
    </location>
</feature>
<feature type="helix" evidence="27">
    <location>
        <begin position="348"/>
        <end position="353"/>
    </location>
</feature>
<feature type="helix" evidence="27">
    <location>
        <begin position="358"/>
        <end position="370"/>
    </location>
</feature>
<feature type="helix" evidence="27">
    <location>
        <begin position="374"/>
        <end position="393"/>
    </location>
</feature>
<feature type="strand" evidence="27">
    <location>
        <begin position="397"/>
        <end position="409"/>
    </location>
</feature>
<feature type="strand" evidence="27">
    <location>
        <begin position="416"/>
        <end position="429"/>
    </location>
</feature>
<feature type="strand" evidence="27">
    <location>
        <begin position="434"/>
        <end position="437"/>
    </location>
</feature>
<feature type="strand" evidence="27">
    <location>
        <begin position="444"/>
        <end position="446"/>
    </location>
</feature>
<feature type="strand" evidence="27">
    <location>
        <begin position="452"/>
        <end position="455"/>
    </location>
</feature>
<feature type="turn" evidence="27">
    <location>
        <begin position="457"/>
        <end position="460"/>
    </location>
</feature>
<feature type="helix" evidence="27">
    <location>
        <begin position="463"/>
        <end position="465"/>
    </location>
</feature>
<feature type="strand" evidence="27">
    <location>
        <begin position="466"/>
        <end position="468"/>
    </location>
</feature>
<feature type="strand" evidence="27">
    <location>
        <begin position="471"/>
        <end position="478"/>
    </location>
</feature>
<feature type="helix" evidence="27">
    <location>
        <begin position="503"/>
        <end position="509"/>
    </location>
</feature>
<feature type="helix" evidence="27">
    <location>
        <begin position="522"/>
        <end position="531"/>
    </location>
</feature>
<feature type="helix" evidence="27">
    <location>
        <begin position="532"/>
        <end position="534"/>
    </location>
</feature>
<sequence>MLFGVKLANEVYPPWKGSYINYEGLKKFLKEDSVKDGSNDKKARWDDSDESKFVEELDKELEKVYGFQLKKYNNLMERLSHLEKQTDTEAAIKALDADAFQRVLEELLSESTELDNFKRLNFTGFAKIVKKHDKLYPKYPSVKSLLEVRLKELPSHSEEYSPLLYRISFLYNILRSNFNTASEPLASASKFSSIVSNDIDMNFRSFKFWVHNDNLMEVKTRILRHLPVLVYANVPSENDDLVNRFESDISNNDEIVGSSSSTSSVEHGLGARSFDPLINTLYFDNEHFELYNDKLLKLNSAPTLRLRWTGQLSDKPDIFLEKKTLIEDEATGKSEFDLTKLQLKQKFINGFIFEGDKKFKEQTLKKLKESGTAGRDLERLEEDFSEIQNFIIKNELQPVFRTVYTRTAFQIPGDDKIRVTIDSNIVFIKEDSFDRERPIRDPNTWHRTDIDANVANPLKFLRGGEYAKFPYSVMEIKVKSSLDSSMSASSMISNVKLPKKHGQWLNDLTNSHLVKEIPKFSIFVQGVASLYGDDEKLDILPFWLPDLETDIRQDPKQAYEEEKKKLLKQKEIQKKIDGMRRLSNLKEPQHQAAVPVSQEENERITSQGDLEADGSSDEETEQEPHSKRSKKVRRRKPKATFLRILAGRDPKLMGVDSEEEEIELPPGVKKPLNLLKNAGPVNVEAKVWLANERTFNRWLSVTSLLSVLTFSIYNSVKKAEYPTLANYMAYVYFGLTIFCALWSYSIYMKRVDIIQQRSGQHLDAPLGPVLVSIVLFVTLVVNFVMAFRNAAKSRQELQIQNLEVPERIPEVLRPLQNYLFKLMGPSSD</sequence>